<gene>
    <name evidence="1" type="primary">thi4</name>
    <name type="ordered locus">YG5714_1786</name>
</gene>
<organism>
    <name type="scientific">Saccharolobus islandicus (strain Y.G.57.14 / Yellowstone #1)</name>
    <name type="common">Sulfolobus islandicus</name>
    <dbReference type="NCBI Taxonomy" id="439386"/>
    <lineage>
        <taxon>Archaea</taxon>
        <taxon>Thermoproteota</taxon>
        <taxon>Thermoprotei</taxon>
        <taxon>Sulfolobales</taxon>
        <taxon>Sulfolobaceae</taxon>
        <taxon>Saccharolobus</taxon>
    </lineage>
</organism>
<accession>C3N749</accession>
<proteinExistence type="inferred from homology"/>
<protein>
    <recommendedName>
        <fullName evidence="1">Thiamine thiazole synthase</fullName>
        <ecNumber evidence="1">2.4.2.59</ecNumber>
    </recommendedName>
</protein>
<comment type="function">
    <text evidence="1">Involved in the biosynthesis of the thiazole moiety of thiamine. Catalyzes the conversion of NAD and glycine to adenosine diphosphate 5-(2-hydroxyethyl)-4-methylthiazole-2-carboxylate (ADT), an adenylated thiazole intermediate, using free sulfide as a source of sulfur.</text>
</comment>
<comment type="catalytic activity">
    <reaction evidence="1">
        <text>hydrogen sulfide + glycine + NAD(+) = ADP-5-ethyl-4-methylthiazole-2-carboxylate + nicotinamide + 3 H2O + H(+)</text>
        <dbReference type="Rhea" id="RHEA:55704"/>
        <dbReference type="ChEBI" id="CHEBI:15377"/>
        <dbReference type="ChEBI" id="CHEBI:15378"/>
        <dbReference type="ChEBI" id="CHEBI:17154"/>
        <dbReference type="ChEBI" id="CHEBI:29919"/>
        <dbReference type="ChEBI" id="CHEBI:57305"/>
        <dbReference type="ChEBI" id="CHEBI:57540"/>
        <dbReference type="ChEBI" id="CHEBI:139151"/>
        <dbReference type="EC" id="2.4.2.59"/>
    </reaction>
</comment>
<comment type="cofactor">
    <cofactor evidence="1">
        <name>Fe(2+)</name>
        <dbReference type="ChEBI" id="CHEBI:29033"/>
    </cofactor>
</comment>
<comment type="pathway">
    <text evidence="1">Cofactor biosynthesis; thiamine diphosphate biosynthesis.</text>
</comment>
<comment type="subunit">
    <text evidence="1">Homooctamer; tetramer of dimers.</text>
</comment>
<comment type="similarity">
    <text evidence="1">Belongs to the THI4 family.</text>
</comment>
<sequence length="267" mass="28688">MEVKIKQVDEVKISRYIIKETMEDWYQFVESDVVIVGAGPSGLSAAYYLAKAGLKTLVFERRLSFGGGIGGGAMLFHKLIIEKPADEILREVNVRLKEVEEGVYVVDSAEFMAKLATAAIDAGAKIIHGVTVDDVIFRENPLRVAGVAVEWTATQMASLHVDPIFISAKAVVDATGHDAEVISVAARKIPELGIVIPGEKSAYSERAEELTVINTGKVAEGLYAAGMAVTEVKGLPRMGPIFGAMVLSGKAVAEEITKDLLKSEIRT</sequence>
<keyword id="KW-0408">Iron</keyword>
<keyword id="KW-0479">Metal-binding</keyword>
<keyword id="KW-0520">NAD</keyword>
<keyword id="KW-0784">Thiamine biosynthesis</keyword>
<keyword id="KW-0808">Transferase</keyword>
<reference key="1">
    <citation type="journal article" date="2009" name="Proc. Natl. Acad. Sci. U.S.A.">
        <title>Biogeography of the Sulfolobus islandicus pan-genome.</title>
        <authorList>
            <person name="Reno M.L."/>
            <person name="Held N.L."/>
            <person name="Fields C.J."/>
            <person name="Burke P.V."/>
            <person name="Whitaker R.J."/>
        </authorList>
    </citation>
    <scope>NUCLEOTIDE SEQUENCE [LARGE SCALE GENOMIC DNA]</scope>
    <source>
        <strain>Y.G.57.14 / Yellowstone #1</strain>
    </source>
</reference>
<evidence type="ECO:0000255" key="1">
    <source>
        <dbReference type="HAMAP-Rule" id="MF_00304"/>
    </source>
</evidence>
<feature type="chain" id="PRO_1000205010" description="Thiamine thiazole synthase">
    <location>
        <begin position="1"/>
        <end position="267"/>
    </location>
</feature>
<feature type="binding site" description="in other chain" evidence="1">
    <location>
        <position position="41"/>
    </location>
    <ligand>
        <name>NAD(+)</name>
        <dbReference type="ChEBI" id="CHEBI:57540"/>
        <note>ligand shared between two adjacent protomers</note>
    </ligand>
</feature>
<feature type="binding site" description="in other chain" evidence="1">
    <location>
        <begin position="60"/>
        <end position="61"/>
    </location>
    <ligand>
        <name>NAD(+)</name>
        <dbReference type="ChEBI" id="CHEBI:57540"/>
        <note>ligand shared between two adjacent protomers</note>
    </ligand>
</feature>
<feature type="binding site" description="in other chain" evidence="1">
    <location>
        <position position="68"/>
    </location>
    <ligand>
        <name>NAD(+)</name>
        <dbReference type="ChEBI" id="CHEBI:57540"/>
        <note>ligand shared between two adjacent protomers</note>
    </ligand>
</feature>
<feature type="binding site" description="in other chain" evidence="1">
    <location>
        <position position="132"/>
    </location>
    <ligand>
        <name>NAD(+)</name>
        <dbReference type="ChEBI" id="CHEBI:57540"/>
        <note>ligand shared between two adjacent protomers</note>
    </ligand>
</feature>
<feature type="binding site" evidence="1">
    <location>
        <begin position="160"/>
        <end position="162"/>
    </location>
    <ligand>
        <name>NAD(+)</name>
        <dbReference type="ChEBI" id="CHEBI:57540"/>
        <note>ligand shared between two adjacent protomers</note>
    </ligand>
</feature>
<feature type="binding site" evidence="1">
    <location>
        <position position="162"/>
    </location>
    <ligand>
        <name>Fe cation</name>
        <dbReference type="ChEBI" id="CHEBI:24875"/>
        <note>ligand shared between two adjacent protomers</note>
    </ligand>
</feature>
<feature type="binding site" description="in other chain" evidence="1">
    <location>
        <position position="177"/>
    </location>
    <ligand>
        <name>Fe cation</name>
        <dbReference type="ChEBI" id="CHEBI:24875"/>
        <note>ligand shared between two adjacent protomers</note>
    </ligand>
</feature>
<feature type="binding site" description="in other chain" evidence="1">
    <location>
        <position position="227"/>
    </location>
    <ligand>
        <name>NAD(+)</name>
        <dbReference type="ChEBI" id="CHEBI:57540"/>
        <note>ligand shared between two adjacent protomers</note>
    </ligand>
</feature>
<feature type="binding site" evidence="1">
    <location>
        <position position="237"/>
    </location>
    <ligand>
        <name>glycine</name>
        <dbReference type="ChEBI" id="CHEBI:57305"/>
    </ligand>
</feature>
<name>THI4_SACI7</name>
<dbReference type="EC" id="2.4.2.59" evidence="1"/>
<dbReference type="EMBL" id="CP001403">
    <property type="protein sequence ID" value="ACP46043.1"/>
    <property type="molecule type" value="Genomic_DNA"/>
</dbReference>
<dbReference type="RefSeq" id="WP_012713900.1">
    <property type="nucleotide sequence ID" value="NC_012622.1"/>
</dbReference>
<dbReference type="SMR" id="C3N749"/>
<dbReference type="KEGG" id="siy:YG5714_1786"/>
<dbReference type="HOGENOM" id="CLU_053727_2_0_2"/>
<dbReference type="UniPathway" id="UPA00060"/>
<dbReference type="Proteomes" id="UP000002308">
    <property type="component" value="Chromosome"/>
</dbReference>
<dbReference type="GO" id="GO:0005506">
    <property type="term" value="F:iron ion binding"/>
    <property type="evidence" value="ECO:0007669"/>
    <property type="project" value="UniProtKB-UniRule"/>
</dbReference>
<dbReference type="GO" id="GO:0016763">
    <property type="term" value="F:pentosyltransferase activity"/>
    <property type="evidence" value="ECO:0007669"/>
    <property type="project" value="UniProtKB-UniRule"/>
</dbReference>
<dbReference type="GO" id="GO:0009228">
    <property type="term" value="P:thiamine biosynthetic process"/>
    <property type="evidence" value="ECO:0007669"/>
    <property type="project" value="UniProtKB-KW"/>
</dbReference>
<dbReference type="GO" id="GO:0009229">
    <property type="term" value="P:thiamine diphosphate biosynthetic process"/>
    <property type="evidence" value="ECO:0007669"/>
    <property type="project" value="UniProtKB-UniRule"/>
</dbReference>
<dbReference type="GO" id="GO:0052837">
    <property type="term" value="P:thiazole biosynthetic process"/>
    <property type="evidence" value="ECO:0007669"/>
    <property type="project" value="UniProtKB-UniRule"/>
</dbReference>
<dbReference type="Gene3D" id="3.50.50.60">
    <property type="entry name" value="FAD/NAD(P)-binding domain"/>
    <property type="match status" value="1"/>
</dbReference>
<dbReference type="HAMAP" id="MF_00304">
    <property type="entry name" value="Thi4"/>
    <property type="match status" value="1"/>
</dbReference>
<dbReference type="InterPro" id="IPR036188">
    <property type="entry name" value="FAD/NAD-bd_sf"/>
</dbReference>
<dbReference type="InterPro" id="IPR002922">
    <property type="entry name" value="Thi4_fam"/>
</dbReference>
<dbReference type="InterPro" id="IPR022828">
    <property type="entry name" value="Thi4_prok"/>
</dbReference>
<dbReference type="NCBIfam" id="TIGR00292">
    <property type="entry name" value="sulfide-dependent adenosine diphosphate thiazole synthase"/>
    <property type="match status" value="1"/>
</dbReference>
<dbReference type="PANTHER" id="PTHR43422">
    <property type="entry name" value="THIAMINE THIAZOLE SYNTHASE"/>
    <property type="match status" value="1"/>
</dbReference>
<dbReference type="PANTHER" id="PTHR43422:SF3">
    <property type="entry name" value="THIAMINE THIAZOLE SYNTHASE"/>
    <property type="match status" value="1"/>
</dbReference>
<dbReference type="Pfam" id="PF01946">
    <property type="entry name" value="Thi4"/>
    <property type="match status" value="1"/>
</dbReference>
<dbReference type="PRINTS" id="PR00368">
    <property type="entry name" value="FADPNR"/>
</dbReference>
<dbReference type="PRINTS" id="PR00411">
    <property type="entry name" value="PNDRDTASEI"/>
</dbReference>
<dbReference type="SUPFAM" id="SSF51905">
    <property type="entry name" value="FAD/NAD(P)-binding domain"/>
    <property type="match status" value="1"/>
</dbReference>